<proteinExistence type="inferred from homology"/>
<reference key="1">
    <citation type="journal article" date="2002" name="Nature">
        <title>The genome sequence of Schizosaccharomyces pombe.</title>
        <authorList>
            <person name="Wood V."/>
            <person name="Gwilliam R."/>
            <person name="Rajandream M.A."/>
            <person name="Lyne M.H."/>
            <person name="Lyne R."/>
            <person name="Stewart A."/>
            <person name="Sgouros J.G."/>
            <person name="Peat N."/>
            <person name="Hayles J."/>
            <person name="Baker S.G."/>
            <person name="Basham D."/>
            <person name="Bowman S."/>
            <person name="Brooks K."/>
            <person name="Brown D."/>
            <person name="Brown S."/>
            <person name="Chillingworth T."/>
            <person name="Churcher C.M."/>
            <person name="Collins M."/>
            <person name="Connor R."/>
            <person name="Cronin A."/>
            <person name="Davis P."/>
            <person name="Feltwell T."/>
            <person name="Fraser A."/>
            <person name="Gentles S."/>
            <person name="Goble A."/>
            <person name="Hamlin N."/>
            <person name="Harris D.E."/>
            <person name="Hidalgo J."/>
            <person name="Hodgson G."/>
            <person name="Holroyd S."/>
            <person name="Hornsby T."/>
            <person name="Howarth S."/>
            <person name="Huckle E.J."/>
            <person name="Hunt S."/>
            <person name="Jagels K."/>
            <person name="James K.D."/>
            <person name="Jones L."/>
            <person name="Jones M."/>
            <person name="Leather S."/>
            <person name="McDonald S."/>
            <person name="McLean J."/>
            <person name="Mooney P."/>
            <person name="Moule S."/>
            <person name="Mungall K.L."/>
            <person name="Murphy L.D."/>
            <person name="Niblett D."/>
            <person name="Odell C."/>
            <person name="Oliver K."/>
            <person name="O'Neil S."/>
            <person name="Pearson D."/>
            <person name="Quail M.A."/>
            <person name="Rabbinowitsch E."/>
            <person name="Rutherford K.M."/>
            <person name="Rutter S."/>
            <person name="Saunders D."/>
            <person name="Seeger K."/>
            <person name="Sharp S."/>
            <person name="Skelton J."/>
            <person name="Simmonds M.N."/>
            <person name="Squares R."/>
            <person name="Squares S."/>
            <person name="Stevens K."/>
            <person name="Taylor K."/>
            <person name="Taylor R.G."/>
            <person name="Tivey A."/>
            <person name="Walsh S.V."/>
            <person name="Warren T."/>
            <person name="Whitehead S."/>
            <person name="Woodward J.R."/>
            <person name="Volckaert G."/>
            <person name="Aert R."/>
            <person name="Robben J."/>
            <person name="Grymonprez B."/>
            <person name="Weltjens I."/>
            <person name="Vanstreels E."/>
            <person name="Rieger M."/>
            <person name="Schaefer M."/>
            <person name="Mueller-Auer S."/>
            <person name="Gabel C."/>
            <person name="Fuchs M."/>
            <person name="Duesterhoeft A."/>
            <person name="Fritzc C."/>
            <person name="Holzer E."/>
            <person name="Moestl D."/>
            <person name="Hilbert H."/>
            <person name="Borzym K."/>
            <person name="Langer I."/>
            <person name="Beck A."/>
            <person name="Lehrach H."/>
            <person name="Reinhardt R."/>
            <person name="Pohl T.M."/>
            <person name="Eger P."/>
            <person name="Zimmermann W."/>
            <person name="Wedler H."/>
            <person name="Wambutt R."/>
            <person name="Purnelle B."/>
            <person name="Goffeau A."/>
            <person name="Cadieu E."/>
            <person name="Dreano S."/>
            <person name="Gloux S."/>
            <person name="Lelaure V."/>
            <person name="Mottier S."/>
            <person name="Galibert F."/>
            <person name="Aves S.J."/>
            <person name="Xiang Z."/>
            <person name="Hunt C."/>
            <person name="Moore K."/>
            <person name="Hurst S.M."/>
            <person name="Lucas M."/>
            <person name="Rochet M."/>
            <person name="Gaillardin C."/>
            <person name="Tallada V.A."/>
            <person name="Garzon A."/>
            <person name="Thode G."/>
            <person name="Daga R.R."/>
            <person name="Cruzado L."/>
            <person name="Jimenez J."/>
            <person name="Sanchez M."/>
            <person name="del Rey F."/>
            <person name="Benito J."/>
            <person name="Dominguez A."/>
            <person name="Revuelta J.L."/>
            <person name="Moreno S."/>
            <person name="Armstrong J."/>
            <person name="Forsburg S.L."/>
            <person name="Cerutti L."/>
            <person name="Lowe T."/>
            <person name="McCombie W.R."/>
            <person name="Paulsen I."/>
            <person name="Potashkin J."/>
            <person name="Shpakovski G.V."/>
            <person name="Ussery D."/>
            <person name="Barrell B.G."/>
            <person name="Nurse P."/>
        </authorList>
    </citation>
    <scope>NUCLEOTIDE SEQUENCE [LARGE SCALE GENOMIC DNA]</scope>
    <source>
        <strain>972 / ATCC 24843</strain>
    </source>
</reference>
<reference key="2">
    <citation type="journal article" date="2000" name="Genes Cells">
        <title>Large-scale screening of intracellular protein localization in living fission yeast cells by the use of a GFP-fusion genomic DNA library.</title>
        <authorList>
            <person name="Ding D.-Q."/>
            <person name="Tomita Y."/>
            <person name="Yamamoto A."/>
            <person name="Chikashige Y."/>
            <person name="Haraguchi T."/>
            <person name="Hiraoka Y."/>
        </authorList>
    </citation>
    <scope>NUCLEOTIDE SEQUENCE [LARGE SCALE GENOMIC DNA] OF 20-133</scope>
    <scope>SUBCELLULAR LOCATION</scope>
    <source>
        <strain>ATCC 38364 / 968</strain>
    </source>
</reference>
<organism>
    <name type="scientific">Schizosaccharomyces pombe (strain 972 / ATCC 24843)</name>
    <name type="common">Fission yeast</name>
    <dbReference type="NCBI Taxonomy" id="284812"/>
    <lineage>
        <taxon>Eukaryota</taxon>
        <taxon>Fungi</taxon>
        <taxon>Dikarya</taxon>
        <taxon>Ascomycota</taxon>
        <taxon>Taphrinomycotina</taxon>
        <taxon>Schizosaccharomycetes</taxon>
        <taxon>Schizosaccharomycetales</taxon>
        <taxon>Schizosaccharomycetaceae</taxon>
        <taxon>Schizosaccharomyces</taxon>
    </lineage>
</organism>
<accession>Q9P7L4</accession>
<accession>Q9UU18</accession>
<dbReference type="EC" id="5.3.2.2" evidence="1"/>
<dbReference type="EMBL" id="CU329671">
    <property type="protein sequence ID" value="CAB76045.1"/>
    <property type="molecule type" value="Genomic_DNA"/>
</dbReference>
<dbReference type="EMBL" id="AB027867">
    <property type="protein sequence ID" value="BAA87171.1"/>
    <property type="molecule type" value="Genomic_DNA"/>
</dbReference>
<dbReference type="PIR" id="T50353">
    <property type="entry name" value="T50353"/>
</dbReference>
<dbReference type="RefSeq" id="NP_596589.1">
    <property type="nucleotide sequence ID" value="NM_001022509.2"/>
</dbReference>
<dbReference type="SMR" id="Q9P7L4"/>
<dbReference type="BioGRID" id="277131">
    <property type="interactions" value="3"/>
</dbReference>
<dbReference type="FunCoup" id="Q9P7L4">
    <property type="interactions" value="343"/>
</dbReference>
<dbReference type="STRING" id="284812.Q9P7L4"/>
<dbReference type="PaxDb" id="4896-SPBC21C3.09c.1"/>
<dbReference type="EnsemblFungi" id="SPBC21C3.09c.1">
    <property type="protein sequence ID" value="SPBC21C3.09c.1:pep"/>
    <property type="gene ID" value="SPBC21C3.09c"/>
</dbReference>
<dbReference type="GeneID" id="2540605"/>
<dbReference type="KEGG" id="spo:2540605"/>
<dbReference type="PomBase" id="SPBC21C3.09c">
    <property type="gene designation" value="oaa1"/>
</dbReference>
<dbReference type="VEuPathDB" id="FungiDB:SPBC21C3.09c"/>
<dbReference type="eggNOG" id="KOG1535">
    <property type="taxonomic scope" value="Eukaryota"/>
</dbReference>
<dbReference type="HOGENOM" id="CLU_028458_5_0_1"/>
<dbReference type="InParanoid" id="Q9P7L4"/>
<dbReference type="OMA" id="NCRKVIC"/>
<dbReference type="PhylomeDB" id="Q9P7L4"/>
<dbReference type="Reactome" id="R-SPO-70268">
    <property type="pathway name" value="Pyruvate metabolism"/>
</dbReference>
<dbReference type="PRO" id="PR:Q9P7L4"/>
<dbReference type="Proteomes" id="UP000002485">
    <property type="component" value="Chromosome II"/>
</dbReference>
<dbReference type="GO" id="GO:0005739">
    <property type="term" value="C:mitochondrion"/>
    <property type="evidence" value="ECO:0000318"/>
    <property type="project" value="GO_Central"/>
</dbReference>
<dbReference type="GO" id="GO:0018773">
    <property type="term" value="F:acetylpyruvate hydrolase activity"/>
    <property type="evidence" value="ECO:0000318"/>
    <property type="project" value="GO_Central"/>
</dbReference>
<dbReference type="GO" id="GO:0047621">
    <property type="term" value="F:acylpyruvate hydrolase activity"/>
    <property type="evidence" value="ECO:0000250"/>
    <property type="project" value="PomBase"/>
</dbReference>
<dbReference type="GO" id="GO:0046872">
    <property type="term" value="F:metal ion binding"/>
    <property type="evidence" value="ECO:0007669"/>
    <property type="project" value="UniProtKB-KW"/>
</dbReference>
<dbReference type="GO" id="GO:0050163">
    <property type="term" value="F:oxaloacetate tautomerase activity"/>
    <property type="evidence" value="ECO:0000250"/>
    <property type="project" value="UniProtKB"/>
</dbReference>
<dbReference type="GO" id="GO:0006107">
    <property type="term" value="P:oxaloacetate metabolic process"/>
    <property type="evidence" value="ECO:0000250"/>
    <property type="project" value="UniProtKB"/>
</dbReference>
<dbReference type="GO" id="GO:0006572">
    <property type="term" value="P:tyrosine catabolic process"/>
    <property type="evidence" value="ECO:0000255"/>
    <property type="project" value="PomBase"/>
</dbReference>
<dbReference type="Gene3D" id="3.90.850.10">
    <property type="entry name" value="Fumarylacetoacetase-like, C-terminal domain"/>
    <property type="match status" value="1"/>
</dbReference>
<dbReference type="InterPro" id="IPR011234">
    <property type="entry name" value="Fumarylacetoacetase-like_C"/>
</dbReference>
<dbReference type="InterPro" id="IPR036663">
    <property type="entry name" value="Fumarylacetoacetase_C_sf"/>
</dbReference>
<dbReference type="PANTHER" id="PTHR11820">
    <property type="entry name" value="ACYLPYRUVASE"/>
    <property type="match status" value="1"/>
</dbReference>
<dbReference type="PANTHER" id="PTHR11820:SF7">
    <property type="entry name" value="ACYLPYRUVASE FAHD1, MITOCHONDRIAL"/>
    <property type="match status" value="1"/>
</dbReference>
<dbReference type="Pfam" id="PF01557">
    <property type="entry name" value="FAA_hydrolase"/>
    <property type="match status" value="1"/>
</dbReference>
<dbReference type="SUPFAM" id="SSF56529">
    <property type="entry name" value="FAH"/>
    <property type="match status" value="1"/>
</dbReference>
<name>OAA1_SCHPO</name>
<feature type="chain" id="PRO_0000156842" description="Oxaloacetate tautomerase oaa1, mitochondrial">
    <location>
        <begin position="1"/>
        <end position="221"/>
    </location>
</feature>
<feature type="binding site" evidence="2">
    <location>
        <position position="59"/>
    </location>
    <ligand>
        <name>Mg(2+)</name>
        <dbReference type="ChEBI" id="CHEBI:18420"/>
    </ligand>
</feature>
<feature type="binding site" evidence="2">
    <location>
        <position position="61"/>
    </location>
    <ligand>
        <name>Mg(2+)</name>
        <dbReference type="ChEBI" id="CHEBI:18420"/>
    </ligand>
</feature>
<feature type="binding site" evidence="2">
    <location>
        <position position="93"/>
    </location>
    <ligand>
        <name>Mg(2+)</name>
        <dbReference type="ChEBI" id="CHEBI:18420"/>
    </ligand>
</feature>
<evidence type="ECO:0000250" key="1">
    <source>
        <dbReference type="UniProtKB" id="P53889"/>
    </source>
</evidence>
<evidence type="ECO:0000250" key="2">
    <source>
        <dbReference type="UniProtKB" id="Q6P587"/>
    </source>
</evidence>
<evidence type="ECO:0000269" key="3">
    <source>
    </source>
</evidence>
<evidence type="ECO:0000305" key="4"/>
<evidence type="ECO:0000312" key="5">
    <source>
        <dbReference type="PomBase" id="SPBC21C3.09c"/>
    </source>
</evidence>
<comment type="function">
    <text evidence="1">Tautomerase that converts enol-oxaloacetate, a strong inhibitor of succinate dehydrogenase, to the physiological keto form of oxaloacetate.</text>
</comment>
<comment type="catalytic activity">
    <reaction evidence="1">
        <text>oxaloacetate = enol-oxaloacetate</text>
        <dbReference type="Rhea" id="RHEA:16021"/>
        <dbReference type="ChEBI" id="CHEBI:16452"/>
        <dbReference type="ChEBI" id="CHEBI:17479"/>
        <dbReference type="EC" id="5.3.2.2"/>
    </reaction>
    <physiologicalReaction direction="right-to-left" evidence="1">
        <dbReference type="Rhea" id="RHEA:16023"/>
    </physiologicalReaction>
</comment>
<comment type="cofactor">
    <cofactor evidence="2">
        <name>Mg(2+)</name>
        <dbReference type="ChEBI" id="CHEBI:18420"/>
    </cofactor>
    <cofactor evidence="2">
        <name>Mn(2+)</name>
        <dbReference type="ChEBI" id="CHEBI:29035"/>
    </cofactor>
    <text evidence="2">Requires a divalent metal cation for activity.</text>
</comment>
<comment type="subcellular location">
    <subcellularLocation>
        <location evidence="1">Mitochondrion</location>
    </subcellularLocation>
    <subcellularLocation>
        <location evidence="3">Cytoplasm</location>
    </subcellularLocation>
</comment>
<comment type="similarity">
    <text evidence="4">Belongs to the FAH family.</text>
</comment>
<gene>
    <name evidence="5" type="primary">oaa1</name>
    <name type="ORF">SPBC21C3.09c</name>
</gene>
<sequence length="221" mass="24173">MLSRAGKVVCIGRNYAAHIRELNNPFPTKPFFFLKPTSAIVEPGHGNLIIPPDVSAHYEVELGLIMKDRLPARRPVSSNSWLDSIGAYFVGIDMTARNIQNEAKKKGLPWSFAKGYDTFLPVGPIIPKHLIPDPHNVILELSLNGKVVQKDSTSLMLNKIPKIFSSITEAMSLNPGDLVLTGTPKGVGPVVPGDILSARLLTAQEQEIIPSKFEIKAEKCD</sequence>
<protein>
    <recommendedName>
        <fullName evidence="4">Oxaloacetate tautomerase oaa1, mitochondrial</fullName>
        <ecNumber evidence="1">5.3.2.2</ecNumber>
    </recommendedName>
    <alternativeName>
        <fullName evidence="4">Acylpyruvase oaa1 homolog</fullName>
    </alternativeName>
</protein>
<keyword id="KW-0963">Cytoplasm</keyword>
<keyword id="KW-0378">Hydrolase</keyword>
<keyword id="KW-0413">Isomerase</keyword>
<keyword id="KW-0460">Magnesium</keyword>
<keyword id="KW-0479">Metal-binding</keyword>
<keyword id="KW-0496">Mitochondrion</keyword>
<keyword id="KW-1185">Reference proteome</keyword>